<feature type="signal peptide" evidence="2">
    <location>
        <begin position="1"/>
        <end position="19"/>
    </location>
</feature>
<feature type="chain" id="PRO_0000429226" description="Toxin ICK-19">
    <location>
        <begin position="20"/>
        <end position="92"/>
    </location>
</feature>
<feature type="glycosylation site" description="N-linked (GlcNAc...) asparagine" evidence="2">
    <location>
        <position position="62"/>
    </location>
</feature>
<feature type="disulfide bond" evidence="1">
    <location>
        <begin position="41"/>
        <end position="55"/>
    </location>
</feature>
<feature type="disulfide bond" evidence="1">
    <location>
        <begin position="48"/>
        <end position="67"/>
    </location>
</feature>
<feature type="disulfide bond" evidence="1">
    <location>
        <begin position="54"/>
        <end position="82"/>
    </location>
</feature>
<feature type="disulfide bond" evidence="1">
    <location>
        <begin position="85"/>
        <end position="92"/>
    </location>
</feature>
<protein>
    <recommendedName>
        <fullName evidence="3">Toxin ICK-19</fullName>
    </recommendedName>
</protein>
<reference key="1">
    <citation type="journal article" date="2013" name="Toxins">
        <title>A proteomics and transcriptomics investigation of the venom from the barychelid spider Trittame loki (brush-foot trapdoor).</title>
        <authorList>
            <person name="Undheim E.A."/>
            <person name="Sunagar K."/>
            <person name="Herzig V."/>
            <person name="Kely L."/>
            <person name="Low D.H."/>
            <person name="Jackson T.N."/>
            <person name="Jones A."/>
            <person name="Kurniawan N."/>
            <person name="King G.F."/>
            <person name="Ali S.A."/>
            <person name="Antunes A."/>
            <person name="Ruder T."/>
            <person name="Fry B.G."/>
        </authorList>
    </citation>
    <scope>NUCLEOTIDE SEQUENCE [MRNA]</scope>
    <source>
        <tissue>Venom gland</tissue>
    </source>
</reference>
<dbReference type="EMBL" id="GAQE01000022">
    <property type="protein sequence ID" value="JAB84532.1"/>
    <property type="molecule type" value="Transcribed_RNA"/>
</dbReference>
<dbReference type="SMR" id="W4VSB2"/>
<dbReference type="ArachnoServer" id="AS002023">
    <property type="toxin name" value="U5-barytoxin-Tl1b"/>
</dbReference>
<dbReference type="GO" id="GO:0005576">
    <property type="term" value="C:extracellular region"/>
    <property type="evidence" value="ECO:0007669"/>
    <property type="project" value="UniProtKB-SubCell"/>
</dbReference>
<dbReference type="GO" id="GO:0099106">
    <property type="term" value="F:ion channel regulator activity"/>
    <property type="evidence" value="ECO:0007669"/>
    <property type="project" value="UniProtKB-KW"/>
</dbReference>
<dbReference type="GO" id="GO:0090729">
    <property type="term" value="F:toxin activity"/>
    <property type="evidence" value="ECO:0007669"/>
    <property type="project" value="UniProtKB-KW"/>
</dbReference>
<dbReference type="InterPro" id="IPR035311">
    <property type="entry name" value="Cys_Knot_tox"/>
</dbReference>
<dbReference type="Pfam" id="PF17486">
    <property type="entry name" value="Cys_Knot_tox"/>
    <property type="match status" value="1"/>
</dbReference>
<keyword id="KW-1015">Disulfide bond</keyword>
<keyword id="KW-0325">Glycoprotein</keyword>
<keyword id="KW-0872">Ion channel impairing toxin</keyword>
<keyword id="KW-0960">Knottin</keyword>
<keyword id="KW-0528">Neurotoxin</keyword>
<keyword id="KW-0964">Secreted</keyword>
<keyword id="KW-0732">Signal</keyword>
<keyword id="KW-0800">Toxin</keyword>
<organism>
    <name type="scientific">Trittame loki</name>
    <name type="common">Brush-footed trapdoor spider</name>
    <dbReference type="NCBI Taxonomy" id="1295018"/>
    <lineage>
        <taxon>Eukaryota</taxon>
        <taxon>Metazoa</taxon>
        <taxon>Ecdysozoa</taxon>
        <taxon>Arthropoda</taxon>
        <taxon>Chelicerata</taxon>
        <taxon>Arachnida</taxon>
        <taxon>Araneae</taxon>
        <taxon>Mygalomorphae</taxon>
        <taxon>Barychelidae</taxon>
        <taxon>Trittame</taxon>
    </lineage>
</organism>
<name>TX21J_TRILK</name>
<proteinExistence type="inferred from homology"/>
<sequence>MKPIVSILIFCALAVVIMGHPLDSGYGIPHIVEKLPNGQWCKTPGDDCSKNNECCKPKDPENYSSGCASQWSGMQGKRVNMCRICYIESSMC</sequence>
<evidence type="ECO:0000250" key="1">
    <source>
        <dbReference type="UniProtKB" id="A0A452CSQ9"/>
    </source>
</evidence>
<evidence type="ECO:0000255" key="2"/>
<evidence type="ECO:0000303" key="3">
    <source>
    </source>
</evidence>
<evidence type="ECO:0000305" key="4"/>
<evidence type="ECO:0000305" key="5">
    <source>
    </source>
</evidence>
<comment type="function">
    <text evidence="4">Probable neurotoxin with ion channel impairing activity.</text>
</comment>
<comment type="subcellular location">
    <subcellularLocation>
        <location evidence="5">Secreted</location>
    </subcellularLocation>
</comment>
<comment type="tissue specificity">
    <text evidence="5">Expressed by the venom gland.</text>
</comment>
<comment type="domain">
    <text evidence="1">The presence of a 'disulfide through disulfide knot' structurally defines this protein as a knottin.</text>
</comment>
<comment type="similarity">
    <text evidence="4">Belongs to the neurotoxin 21 family.</text>
</comment>
<accession>W4VSB2</accession>